<gene>
    <name type="primary">CET1</name>
    <name type="ordered locus">YALI0F07865g</name>
</gene>
<accession>Q6C2H4</accession>
<organism>
    <name type="scientific">Yarrowia lipolytica (strain CLIB 122 / E 150)</name>
    <name type="common">Yeast</name>
    <name type="synonym">Candida lipolytica</name>
    <dbReference type="NCBI Taxonomy" id="284591"/>
    <lineage>
        <taxon>Eukaryota</taxon>
        <taxon>Fungi</taxon>
        <taxon>Dikarya</taxon>
        <taxon>Ascomycota</taxon>
        <taxon>Saccharomycotina</taxon>
        <taxon>Dipodascomycetes</taxon>
        <taxon>Dipodascales</taxon>
        <taxon>Dipodascales incertae sedis</taxon>
        <taxon>Yarrowia</taxon>
    </lineage>
</organism>
<evidence type="ECO:0000250" key="1"/>
<evidence type="ECO:0000250" key="2">
    <source>
        <dbReference type="UniProtKB" id="O13297"/>
    </source>
</evidence>
<evidence type="ECO:0000256" key="3">
    <source>
        <dbReference type="SAM" id="MobiDB-lite"/>
    </source>
</evidence>
<evidence type="ECO:0000305" key="4"/>
<feature type="chain" id="PRO_0000210118" description="mRNA-capping enzyme subunit beta">
    <location>
        <begin position="1"/>
        <end position="386"/>
    </location>
</feature>
<feature type="region of interest" description="Disordered" evidence="3">
    <location>
        <begin position="1"/>
        <end position="137"/>
    </location>
</feature>
<feature type="compositionally biased region" description="Polar residues" evidence="3">
    <location>
        <begin position="20"/>
        <end position="32"/>
    </location>
</feature>
<feature type="compositionally biased region" description="Polar residues" evidence="3">
    <location>
        <begin position="41"/>
        <end position="56"/>
    </location>
</feature>
<feature type="compositionally biased region" description="Acidic residues" evidence="3">
    <location>
        <begin position="57"/>
        <end position="67"/>
    </location>
</feature>
<feature type="compositionally biased region" description="Basic and acidic residues" evidence="3">
    <location>
        <begin position="93"/>
        <end position="115"/>
    </location>
</feature>
<protein>
    <recommendedName>
        <fullName>mRNA-capping enzyme subunit beta</fullName>
        <ecNumber evidence="2">3.6.1.74</ecNumber>
    </recommendedName>
    <alternativeName>
        <fullName>mRNA 5'-phosphatase</fullName>
    </alternativeName>
    <alternativeName>
        <fullName>mRNA 5'-triphosphate monophosphatase</fullName>
    </alternativeName>
</protein>
<name>CET1_YARLI</name>
<comment type="function">
    <text evidence="2">First step of mRNA capping. Converts the 5'-triphosphate end of a nascent mRNA chain into a diphosphate end.</text>
</comment>
<comment type="catalytic activity">
    <reaction evidence="2">
        <text>a 5'-end triphospho-ribonucleoside in mRNA + H2O = a 5'-end diphospho-ribonucleoside in mRNA + phosphate + H(+)</text>
        <dbReference type="Rhea" id="RHEA:67004"/>
        <dbReference type="Rhea" id="RHEA-COMP:17164"/>
        <dbReference type="Rhea" id="RHEA-COMP:17165"/>
        <dbReference type="ChEBI" id="CHEBI:15377"/>
        <dbReference type="ChEBI" id="CHEBI:15378"/>
        <dbReference type="ChEBI" id="CHEBI:43474"/>
        <dbReference type="ChEBI" id="CHEBI:167616"/>
        <dbReference type="ChEBI" id="CHEBI:167618"/>
        <dbReference type="EC" id="3.6.1.74"/>
    </reaction>
    <physiologicalReaction direction="left-to-right" evidence="2">
        <dbReference type="Rhea" id="RHEA:67005"/>
    </physiologicalReaction>
</comment>
<comment type="cofactor">
    <cofactor evidence="2">
        <name>Mg(2+)</name>
        <dbReference type="ChEBI" id="CHEBI:18420"/>
    </cofactor>
</comment>
<comment type="subunit">
    <text evidence="2">Heterodimer. The mRNA-capping enzyme is composed of two separate chains alpha and beta, respectively a mRNA guanylyltransferase and an mRNA 5'-triphosphate monophosphatase.</text>
</comment>
<comment type="subcellular location">
    <subcellularLocation>
        <location evidence="1">Nucleus</location>
    </subcellularLocation>
</comment>
<comment type="similarity">
    <text evidence="4">Belongs to the fungal TPase family.</text>
</comment>
<dbReference type="EC" id="3.6.1.74" evidence="2"/>
<dbReference type="EMBL" id="CR382132">
    <property type="protein sequence ID" value="CAG77945.1"/>
    <property type="molecule type" value="Genomic_DNA"/>
</dbReference>
<dbReference type="RefSeq" id="XP_505138.1">
    <property type="nucleotide sequence ID" value="XM_505138.1"/>
</dbReference>
<dbReference type="SMR" id="Q6C2H4"/>
<dbReference type="FunCoup" id="Q6C2H4">
    <property type="interactions" value="75"/>
</dbReference>
<dbReference type="STRING" id="284591.Q6C2H4"/>
<dbReference type="EnsemblFungi" id="CAG77945">
    <property type="protein sequence ID" value="CAG77945"/>
    <property type="gene ID" value="YALI0_F07865g"/>
</dbReference>
<dbReference type="KEGG" id="yli:2908374"/>
<dbReference type="VEuPathDB" id="FungiDB:YALI0_F07865g"/>
<dbReference type="HOGENOM" id="CLU_028201_0_0_1"/>
<dbReference type="InParanoid" id="Q6C2H4"/>
<dbReference type="OMA" id="HHMIMTR"/>
<dbReference type="OrthoDB" id="93026at4891"/>
<dbReference type="Proteomes" id="UP000001300">
    <property type="component" value="Chromosome F"/>
</dbReference>
<dbReference type="GO" id="GO:0031533">
    <property type="term" value="C:mRNA capping enzyme complex"/>
    <property type="evidence" value="ECO:0000318"/>
    <property type="project" value="GO_Central"/>
</dbReference>
<dbReference type="GO" id="GO:0140818">
    <property type="term" value="F:mRNA 5'-triphosphate monophosphatase activity"/>
    <property type="evidence" value="ECO:0007669"/>
    <property type="project" value="RHEA"/>
</dbReference>
<dbReference type="GO" id="GO:0004651">
    <property type="term" value="F:polynucleotide 5'-phosphatase activity"/>
    <property type="evidence" value="ECO:0000318"/>
    <property type="project" value="GO_Central"/>
</dbReference>
<dbReference type="GO" id="GO:0006370">
    <property type="term" value="P:7-methylguanosine mRNA capping"/>
    <property type="evidence" value="ECO:0000318"/>
    <property type="project" value="GO_Central"/>
</dbReference>
<dbReference type="CDD" id="cd07470">
    <property type="entry name" value="CYTH-like_mRNA_RTPase"/>
    <property type="match status" value="1"/>
</dbReference>
<dbReference type="Gene3D" id="3.20.100.10">
    <property type="entry name" value="mRNA triphosphatase Cet1-like"/>
    <property type="match status" value="1"/>
</dbReference>
<dbReference type="InterPro" id="IPR040343">
    <property type="entry name" value="Cet1/Ctl1"/>
</dbReference>
<dbReference type="InterPro" id="IPR033469">
    <property type="entry name" value="CYTH-like_dom_sf"/>
</dbReference>
<dbReference type="InterPro" id="IPR004206">
    <property type="entry name" value="mRNA_triPase_Cet1"/>
</dbReference>
<dbReference type="InterPro" id="IPR037009">
    <property type="entry name" value="mRNA_triPase_Cet1_sf"/>
</dbReference>
<dbReference type="PANTHER" id="PTHR28118:SF1">
    <property type="entry name" value="POLYNUCLEOTIDE 5'-TRIPHOSPHATASE CTL1-RELATED"/>
    <property type="match status" value="1"/>
</dbReference>
<dbReference type="PANTHER" id="PTHR28118">
    <property type="entry name" value="POLYNUCLEOTIDE 5'-TRIPHOSPHATASE-RELATED"/>
    <property type="match status" value="1"/>
</dbReference>
<dbReference type="Pfam" id="PF02940">
    <property type="entry name" value="mRNA_triPase"/>
    <property type="match status" value="1"/>
</dbReference>
<dbReference type="SUPFAM" id="SSF55154">
    <property type="entry name" value="CYTH-like phosphatases"/>
    <property type="match status" value="1"/>
</dbReference>
<sequence length="386" mass="43288">MDIGKMINDDNGSDSRRTSVKSLLNSPPTGLPSSDDRPDSKASSTSDLAQQLTNEMESGEDDDDEDAAAAVNHKPRRYSRPPIWATKWQGTGRHAERDHRPPPHRQDRRDPRMERQSGGSRALPASSTTTITGCPPSISGIKPFESVTRTVTSWLHAHLSTMSPEQLQTVELEAKIGTIQHKKAGADRARLDLPIVTEAVVNQQYVQAQCSFSSQLPESLLEEAKRILDAADPKFIKSTEHTIHRDEIYEGQQDKGNLRITRDDVTGRQVAKIRKKAIAHIMIHCPTDPFDIRLSLATESPTDDVPQGVCRTRRKDRISYLYDGFRADLTKVSGSSMSSELEMEADSHKLIGYFTDRNDPHNMDKVEELLQILLDSMRYVNRRLKA</sequence>
<keyword id="KW-0378">Hydrolase</keyword>
<keyword id="KW-0506">mRNA capping</keyword>
<keyword id="KW-0507">mRNA processing</keyword>
<keyword id="KW-0539">Nucleus</keyword>
<keyword id="KW-1185">Reference proteome</keyword>
<proteinExistence type="inferred from homology"/>
<reference key="1">
    <citation type="journal article" date="2004" name="Nature">
        <title>Genome evolution in yeasts.</title>
        <authorList>
            <person name="Dujon B."/>
            <person name="Sherman D."/>
            <person name="Fischer G."/>
            <person name="Durrens P."/>
            <person name="Casaregola S."/>
            <person name="Lafontaine I."/>
            <person name="de Montigny J."/>
            <person name="Marck C."/>
            <person name="Neuveglise C."/>
            <person name="Talla E."/>
            <person name="Goffard N."/>
            <person name="Frangeul L."/>
            <person name="Aigle M."/>
            <person name="Anthouard V."/>
            <person name="Babour A."/>
            <person name="Barbe V."/>
            <person name="Barnay S."/>
            <person name="Blanchin S."/>
            <person name="Beckerich J.-M."/>
            <person name="Beyne E."/>
            <person name="Bleykasten C."/>
            <person name="Boisrame A."/>
            <person name="Boyer J."/>
            <person name="Cattolico L."/>
            <person name="Confanioleri F."/>
            <person name="de Daruvar A."/>
            <person name="Despons L."/>
            <person name="Fabre E."/>
            <person name="Fairhead C."/>
            <person name="Ferry-Dumazet H."/>
            <person name="Groppi A."/>
            <person name="Hantraye F."/>
            <person name="Hennequin C."/>
            <person name="Jauniaux N."/>
            <person name="Joyet P."/>
            <person name="Kachouri R."/>
            <person name="Kerrest A."/>
            <person name="Koszul R."/>
            <person name="Lemaire M."/>
            <person name="Lesur I."/>
            <person name="Ma L."/>
            <person name="Muller H."/>
            <person name="Nicaud J.-M."/>
            <person name="Nikolski M."/>
            <person name="Oztas S."/>
            <person name="Ozier-Kalogeropoulos O."/>
            <person name="Pellenz S."/>
            <person name="Potier S."/>
            <person name="Richard G.-F."/>
            <person name="Straub M.-L."/>
            <person name="Suleau A."/>
            <person name="Swennen D."/>
            <person name="Tekaia F."/>
            <person name="Wesolowski-Louvel M."/>
            <person name="Westhof E."/>
            <person name="Wirth B."/>
            <person name="Zeniou-Meyer M."/>
            <person name="Zivanovic Y."/>
            <person name="Bolotin-Fukuhara M."/>
            <person name="Thierry A."/>
            <person name="Bouchier C."/>
            <person name="Caudron B."/>
            <person name="Scarpelli C."/>
            <person name="Gaillardin C."/>
            <person name="Weissenbach J."/>
            <person name="Wincker P."/>
            <person name="Souciet J.-L."/>
        </authorList>
    </citation>
    <scope>NUCLEOTIDE SEQUENCE [LARGE SCALE GENOMIC DNA]</scope>
    <source>
        <strain>CLIB 122 / E 150</strain>
    </source>
</reference>